<evidence type="ECO:0000250" key="1"/>
<evidence type="ECO:0000255" key="2">
    <source>
        <dbReference type="HAMAP-Rule" id="MF_01026"/>
    </source>
</evidence>
<protein>
    <recommendedName>
        <fullName evidence="2">3-isopropylmalate dehydratase large subunit</fullName>
        <ecNumber evidence="2">4.2.1.33</ecNumber>
    </recommendedName>
    <alternativeName>
        <fullName evidence="2">Alpha-IPM isomerase</fullName>
        <shortName evidence="2">IPMI</shortName>
    </alternativeName>
    <alternativeName>
        <fullName evidence="2">Isopropylmalate isomerase</fullName>
    </alternativeName>
</protein>
<keyword id="KW-0004">4Fe-4S</keyword>
<keyword id="KW-0028">Amino-acid biosynthesis</keyword>
<keyword id="KW-0100">Branched-chain amino acid biosynthesis</keyword>
<keyword id="KW-0408">Iron</keyword>
<keyword id="KW-0411">Iron-sulfur</keyword>
<keyword id="KW-0432">Leucine biosynthesis</keyword>
<keyword id="KW-0456">Lyase</keyword>
<keyword id="KW-0479">Metal-binding</keyword>
<keyword id="KW-1185">Reference proteome</keyword>
<organism>
    <name type="scientific">Escherichia coli O6:H1 (strain CFT073 / ATCC 700928 / UPEC)</name>
    <dbReference type="NCBI Taxonomy" id="199310"/>
    <lineage>
        <taxon>Bacteria</taxon>
        <taxon>Pseudomonadati</taxon>
        <taxon>Pseudomonadota</taxon>
        <taxon>Gammaproteobacteria</taxon>
        <taxon>Enterobacterales</taxon>
        <taxon>Enterobacteriaceae</taxon>
        <taxon>Escherichia</taxon>
    </lineage>
</organism>
<sequence>MAKTLYEKLFDAHVVYEAENETPLLYIDRHLVHEVTSPQAFDGLRAHGRPVRQPGKTFATMDHNVSTQTKDINACGEMARIQMQELIKNCKEFGVELYDLNHPYQGIVHVMGPEQGVTLPGMTIVCGDSHTATHGAFGALAFGIGTSEVEHVLATQTLKQGRAKTMKIEVQGKAAPGITAKDIVLAIIGKTGSAGGTGHVVEFCGEAIRDLSMEGRMTLCNMAIEMGAKAGLVAPDETTFNYVKGRLHAPKGKDFDDAVAYWKTLQTDEGATFDTVVTLQAEEISPQVTWGTNPGQVISVNDNIPDPASFADPVERASAEKALAYMGLKPGIPLTEVAIDKVFIGSCTNSRIEDLRAAAEIAKGRKVAPGVQALVVPGSGPVKAQAEAEGLDKIFIEAGFEWRLPGCSMCLAMNNDRLNPGERCASTSNRNFEGRQGRGGRTHLVSPAMAAAAAVTGHFADIRNIK</sequence>
<feature type="initiator methionine" description="Removed" evidence="1">
    <location>
        <position position="1"/>
    </location>
</feature>
<feature type="chain" id="PRO_0000076747" description="3-isopropylmalate dehydratase large subunit">
    <location>
        <begin position="2"/>
        <end position="466"/>
    </location>
</feature>
<feature type="binding site" evidence="2">
    <location>
        <position position="347"/>
    </location>
    <ligand>
        <name>[4Fe-4S] cluster</name>
        <dbReference type="ChEBI" id="CHEBI:49883"/>
    </ligand>
</feature>
<feature type="binding site" evidence="2">
    <location>
        <position position="407"/>
    </location>
    <ligand>
        <name>[4Fe-4S] cluster</name>
        <dbReference type="ChEBI" id="CHEBI:49883"/>
    </ligand>
</feature>
<feature type="binding site" evidence="2">
    <location>
        <position position="410"/>
    </location>
    <ligand>
        <name>[4Fe-4S] cluster</name>
        <dbReference type="ChEBI" id="CHEBI:49883"/>
    </ligand>
</feature>
<comment type="function">
    <text evidence="2">Catalyzes the isomerization between 2-isopropylmalate and 3-isopropylmalate, via the formation of 2-isopropylmaleate.</text>
</comment>
<comment type="catalytic activity">
    <reaction evidence="2">
        <text>(2R,3S)-3-isopropylmalate = (2S)-2-isopropylmalate</text>
        <dbReference type="Rhea" id="RHEA:32287"/>
        <dbReference type="ChEBI" id="CHEBI:1178"/>
        <dbReference type="ChEBI" id="CHEBI:35121"/>
        <dbReference type="EC" id="4.2.1.33"/>
    </reaction>
</comment>
<comment type="cofactor">
    <cofactor evidence="2">
        <name>[4Fe-4S] cluster</name>
        <dbReference type="ChEBI" id="CHEBI:49883"/>
    </cofactor>
    <text evidence="2">Binds 1 [4Fe-4S] cluster per subunit.</text>
</comment>
<comment type="pathway">
    <text evidence="2">Amino-acid biosynthesis; L-leucine biosynthesis; L-leucine from 3-methyl-2-oxobutanoate: step 2/4.</text>
</comment>
<comment type="subunit">
    <text evidence="2">Heterodimer of LeuC and LeuD.</text>
</comment>
<comment type="similarity">
    <text evidence="2">Belongs to the aconitase/IPM isomerase family. LeuC type 1 subfamily.</text>
</comment>
<proteinExistence type="inferred from homology"/>
<name>LEUC_ECOL6</name>
<reference key="1">
    <citation type="journal article" date="2002" name="Proc. Natl. Acad. Sci. U.S.A.">
        <title>Extensive mosaic structure revealed by the complete genome sequence of uropathogenic Escherichia coli.</title>
        <authorList>
            <person name="Welch R.A."/>
            <person name="Burland V."/>
            <person name="Plunkett G. III"/>
            <person name="Redford P."/>
            <person name="Roesch P."/>
            <person name="Rasko D."/>
            <person name="Buckles E.L."/>
            <person name="Liou S.-R."/>
            <person name="Boutin A."/>
            <person name="Hackett J."/>
            <person name="Stroud D."/>
            <person name="Mayhew G.F."/>
            <person name="Rose D.J."/>
            <person name="Zhou S."/>
            <person name="Schwartz D.C."/>
            <person name="Perna N.T."/>
            <person name="Mobley H.L.T."/>
            <person name="Donnenberg M.S."/>
            <person name="Blattner F.R."/>
        </authorList>
    </citation>
    <scope>NUCLEOTIDE SEQUENCE [LARGE SCALE GENOMIC DNA]</scope>
    <source>
        <strain>CFT073 / ATCC 700928 / UPEC</strain>
    </source>
</reference>
<accession>P0A6A7</accession>
<accession>P30127</accession>
<accession>P78042</accession>
<accession>Q8FL77</accession>
<gene>
    <name evidence="2" type="primary">leuC</name>
    <name type="ordered locus">c0089</name>
</gene>
<dbReference type="EC" id="4.2.1.33" evidence="2"/>
<dbReference type="EMBL" id="AE014075">
    <property type="protein sequence ID" value="AAN78585.1"/>
    <property type="molecule type" value="Genomic_DNA"/>
</dbReference>
<dbReference type="RefSeq" id="WP_001140652.1">
    <property type="nucleotide sequence ID" value="NZ_CP051263.1"/>
</dbReference>
<dbReference type="SMR" id="P0A6A7"/>
<dbReference type="STRING" id="199310.c0089"/>
<dbReference type="GeneID" id="75202111"/>
<dbReference type="KEGG" id="ecc:c0089"/>
<dbReference type="eggNOG" id="COG0065">
    <property type="taxonomic scope" value="Bacteria"/>
</dbReference>
<dbReference type="HOGENOM" id="CLU_006714_3_4_6"/>
<dbReference type="BioCyc" id="ECOL199310:C0089-MONOMER"/>
<dbReference type="UniPathway" id="UPA00048">
    <property type="reaction ID" value="UER00071"/>
</dbReference>
<dbReference type="Proteomes" id="UP000001410">
    <property type="component" value="Chromosome"/>
</dbReference>
<dbReference type="GO" id="GO:0003861">
    <property type="term" value="F:3-isopropylmalate dehydratase activity"/>
    <property type="evidence" value="ECO:0007669"/>
    <property type="project" value="UniProtKB-UniRule"/>
</dbReference>
<dbReference type="GO" id="GO:0051539">
    <property type="term" value="F:4 iron, 4 sulfur cluster binding"/>
    <property type="evidence" value="ECO:0007669"/>
    <property type="project" value="UniProtKB-KW"/>
</dbReference>
<dbReference type="GO" id="GO:0046872">
    <property type="term" value="F:metal ion binding"/>
    <property type="evidence" value="ECO:0007669"/>
    <property type="project" value="UniProtKB-KW"/>
</dbReference>
<dbReference type="GO" id="GO:0009098">
    <property type="term" value="P:L-leucine biosynthetic process"/>
    <property type="evidence" value="ECO:0007669"/>
    <property type="project" value="UniProtKB-UniRule"/>
</dbReference>
<dbReference type="CDD" id="cd01583">
    <property type="entry name" value="IPMI"/>
    <property type="match status" value="1"/>
</dbReference>
<dbReference type="FunFam" id="3.30.499.10:FF:000006">
    <property type="entry name" value="3-isopropylmalate dehydratase large subunit"/>
    <property type="match status" value="1"/>
</dbReference>
<dbReference type="FunFam" id="3.30.499.10:FF:000007">
    <property type="entry name" value="3-isopropylmalate dehydratase large subunit"/>
    <property type="match status" value="1"/>
</dbReference>
<dbReference type="Gene3D" id="3.30.499.10">
    <property type="entry name" value="Aconitase, domain 3"/>
    <property type="match status" value="2"/>
</dbReference>
<dbReference type="HAMAP" id="MF_01026">
    <property type="entry name" value="LeuC_type1"/>
    <property type="match status" value="1"/>
</dbReference>
<dbReference type="InterPro" id="IPR004430">
    <property type="entry name" value="3-IsopropMal_deHydase_lsu"/>
</dbReference>
<dbReference type="InterPro" id="IPR015931">
    <property type="entry name" value="Acnase/IPM_dHydase_lsu_aba_1/3"/>
</dbReference>
<dbReference type="InterPro" id="IPR001030">
    <property type="entry name" value="Acoase/IPM_deHydtase_lsu_aba"/>
</dbReference>
<dbReference type="InterPro" id="IPR018136">
    <property type="entry name" value="Aconitase_4Fe-4S_BS"/>
</dbReference>
<dbReference type="InterPro" id="IPR036008">
    <property type="entry name" value="Aconitase_4Fe-4S_dom"/>
</dbReference>
<dbReference type="InterPro" id="IPR050067">
    <property type="entry name" value="IPM_dehydratase_rel_enz"/>
</dbReference>
<dbReference type="InterPro" id="IPR033941">
    <property type="entry name" value="IPMI_cat"/>
</dbReference>
<dbReference type="NCBIfam" id="TIGR00170">
    <property type="entry name" value="leuC"/>
    <property type="match status" value="1"/>
</dbReference>
<dbReference type="NCBIfam" id="NF004016">
    <property type="entry name" value="PRK05478.1"/>
    <property type="match status" value="1"/>
</dbReference>
<dbReference type="NCBIfam" id="NF009116">
    <property type="entry name" value="PRK12466.1"/>
    <property type="match status" value="1"/>
</dbReference>
<dbReference type="PANTHER" id="PTHR43822:SF9">
    <property type="entry name" value="3-ISOPROPYLMALATE DEHYDRATASE"/>
    <property type="match status" value="1"/>
</dbReference>
<dbReference type="PANTHER" id="PTHR43822">
    <property type="entry name" value="HOMOACONITASE, MITOCHONDRIAL-RELATED"/>
    <property type="match status" value="1"/>
</dbReference>
<dbReference type="Pfam" id="PF00330">
    <property type="entry name" value="Aconitase"/>
    <property type="match status" value="1"/>
</dbReference>
<dbReference type="PRINTS" id="PR00415">
    <property type="entry name" value="ACONITASE"/>
</dbReference>
<dbReference type="SUPFAM" id="SSF53732">
    <property type="entry name" value="Aconitase iron-sulfur domain"/>
    <property type="match status" value="1"/>
</dbReference>
<dbReference type="PROSITE" id="PS00450">
    <property type="entry name" value="ACONITASE_1"/>
    <property type="match status" value="1"/>
</dbReference>
<dbReference type="PROSITE" id="PS01244">
    <property type="entry name" value="ACONITASE_2"/>
    <property type="match status" value="1"/>
</dbReference>